<evidence type="ECO:0000255" key="1">
    <source>
        <dbReference type="HAMAP-Rule" id="MF_00539"/>
    </source>
</evidence>
<evidence type="ECO:0000256" key="2">
    <source>
        <dbReference type="SAM" id="MobiDB-lite"/>
    </source>
</evidence>
<evidence type="ECO:0000305" key="3"/>
<dbReference type="EMBL" id="CP000084">
    <property type="protein sequence ID" value="AAZ21042.1"/>
    <property type="molecule type" value="Genomic_DNA"/>
</dbReference>
<dbReference type="RefSeq" id="WP_006997689.1">
    <property type="nucleotide sequence ID" value="NC_007205.1"/>
</dbReference>
<dbReference type="SMR" id="Q4FP47"/>
<dbReference type="STRING" id="335992.SAR11_0221"/>
<dbReference type="GeneID" id="66294718"/>
<dbReference type="KEGG" id="pub:SAR11_0221"/>
<dbReference type="eggNOG" id="COG0211">
    <property type="taxonomic scope" value="Bacteria"/>
</dbReference>
<dbReference type="HOGENOM" id="CLU_095424_4_1_5"/>
<dbReference type="OrthoDB" id="9803474at2"/>
<dbReference type="Proteomes" id="UP000002528">
    <property type="component" value="Chromosome"/>
</dbReference>
<dbReference type="GO" id="GO:1990904">
    <property type="term" value="C:ribonucleoprotein complex"/>
    <property type="evidence" value="ECO:0007669"/>
    <property type="project" value="UniProtKB-KW"/>
</dbReference>
<dbReference type="GO" id="GO:0005840">
    <property type="term" value="C:ribosome"/>
    <property type="evidence" value="ECO:0007669"/>
    <property type="project" value="UniProtKB-KW"/>
</dbReference>
<dbReference type="GO" id="GO:0003735">
    <property type="term" value="F:structural constituent of ribosome"/>
    <property type="evidence" value="ECO:0007669"/>
    <property type="project" value="InterPro"/>
</dbReference>
<dbReference type="GO" id="GO:0006412">
    <property type="term" value="P:translation"/>
    <property type="evidence" value="ECO:0007669"/>
    <property type="project" value="UniProtKB-UniRule"/>
</dbReference>
<dbReference type="FunFam" id="2.40.50.100:FF:000020">
    <property type="entry name" value="50S ribosomal protein L27"/>
    <property type="match status" value="1"/>
</dbReference>
<dbReference type="Gene3D" id="2.40.50.100">
    <property type="match status" value="1"/>
</dbReference>
<dbReference type="HAMAP" id="MF_00539">
    <property type="entry name" value="Ribosomal_bL27"/>
    <property type="match status" value="1"/>
</dbReference>
<dbReference type="InterPro" id="IPR001684">
    <property type="entry name" value="Ribosomal_bL27"/>
</dbReference>
<dbReference type="InterPro" id="IPR018261">
    <property type="entry name" value="Ribosomal_bL27_CS"/>
</dbReference>
<dbReference type="NCBIfam" id="TIGR00062">
    <property type="entry name" value="L27"/>
    <property type="match status" value="1"/>
</dbReference>
<dbReference type="PANTHER" id="PTHR15893:SF0">
    <property type="entry name" value="LARGE RIBOSOMAL SUBUNIT PROTEIN BL27M"/>
    <property type="match status" value="1"/>
</dbReference>
<dbReference type="PANTHER" id="PTHR15893">
    <property type="entry name" value="RIBOSOMAL PROTEIN L27"/>
    <property type="match status" value="1"/>
</dbReference>
<dbReference type="Pfam" id="PF01016">
    <property type="entry name" value="Ribosomal_L27"/>
    <property type="match status" value="1"/>
</dbReference>
<dbReference type="PRINTS" id="PR00063">
    <property type="entry name" value="RIBOSOMALL27"/>
</dbReference>
<dbReference type="SUPFAM" id="SSF110324">
    <property type="entry name" value="Ribosomal L27 protein-like"/>
    <property type="match status" value="1"/>
</dbReference>
<dbReference type="PROSITE" id="PS00831">
    <property type="entry name" value="RIBOSOMAL_L27"/>
    <property type="match status" value="1"/>
</dbReference>
<accession>Q4FP47</accession>
<comment type="similarity">
    <text evidence="1">Belongs to the bacterial ribosomal protein bL27 family.</text>
</comment>
<organism>
    <name type="scientific">Pelagibacter ubique (strain HTCC1062)</name>
    <dbReference type="NCBI Taxonomy" id="335992"/>
    <lineage>
        <taxon>Bacteria</taxon>
        <taxon>Pseudomonadati</taxon>
        <taxon>Pseudomonadota</taxon>
        <taxon>Alphaproteobacteria</taxon>
        <taxon>Candidatus Pelagibacterales</taxon>
        <taxon>Candidatus Pelagibacteraceae</taxon>
        <taxon>Candidatus Pelagibacter</taxon>
    </lineage>
</organism>
<name>RL27_PELUB</name>
<proteinExistence type="inferred from homology"/>
<keyword id="KW-1185">Reference proteome</keyword>
<keyword id="KW-0687">Ribonucleoprotein</keyword>
<keyword id="KW-0689">Ribosomal protein</keyword>
<sequence length="84" mass="8975">MATKKAGGSSRNGRDSAGRRLGVKKYGGEVVIPGNIIVRQRGTKIFPGENVGMGKDHSIFSVVEGKVVFKKGKSDRTFVSVKPN</sequence>
<protein>
    <recommendedName>
        <fullName evidence="1">Large ribosomal subunit protein bL27</fullName>
    </recommendedName>
    <alternativeName>
        <fullName evidence="3">50S ribosomal protein L27</fullName>
    </alternativeName>
</protein>
<feature type="chain" id="PRO_1000017545" description="Large ribosomal subunit protein bL27">
    <location>
        <begin position="1"/>
        <end position="84"/>
    </location>
</feature>
<feature type="region of interest" description="Disordered" evidence="2">
    <location>
        <begin position="1"/>
        <end position="21"/>
    </location>
</feature>
<gene>
    <name evidence="1" type="primary">rpmA</name>
    <name type="ordered locus">SAR11_0221</name>
</gene>
<reference key="1">
    <citation type="journal article" date="2005" name="Science">
        <title>Genome streamlining in a cosmopolitan oceanic bacterium.</title>
        <authorList>
            <person name="Giovannoni S.J."/>
            <person name="Tripp H.J."/>
            <person name="Givan S."/>
            <person name="Podar M."/>
            <person name="Vergin K.L."/>
            <person name="Baptista D."/>
            <person name="Bibbs L."/>
            <person name="Eads J."/>
            <person name="Richardson T.H."/>
            <person name="Noordewier M."/>
            <person name="Rappe M.S."/>
            <person name="Short J.M."/>
            <person name="Carrington J.C."/>
            <person name="Mathur E.J."/>
        </authorList>
    </citation>
    <scope>NUCLEOTIDE SEQUENCE [LARGE SCALE GENOMIC DNA]</scope>
    <source>
        <strain>HTCC1062</strain>
    </source>
</reference>